<comment type="domain">
    <text evidence="1">The N-terminal and the C-terminal half of the protein have a very similar 3D-structure, suggesting they arose from duplication. Requires a bound zinc ion for normal folding and solubility.</text>
</comment>
<comment type="similarity">
    <text evidence="2">Belongs to the UPF0587 family.</text>
</comment>
<sequence>MVKFALQFKASLENLTQLRPHGEDFRWFLKLKCGNCGEVSDKWQYITLMDSVPLKGGRGSASMVQRCKLCSRENSIDILAASLHPYNAEDSETFKTIVEFECRGLEPIDFQPQAGFAAEGAETGTPFHEINLQEKDWTDYDEKAKESVGIYEVEHRFTKC</sequence>
<dbReference type="EMBL" id="BC106465">
    <property type="protein sequence ID" value="AAI06466.1"/>
    <property type="molecule type" value="mRNA"/>
</dbReference>
<dbReference type="RefSeq" id="NP_001089748.1">
    <property type="nucleotide sequence ID" value="NM_001096279.1"/>
</dbReference>
<dbReference type="SMR" id="Q3B8G0"/>
<dbReference type="DNASU" id="734812"/>
<dbReference type="GeneID" id="734812"/>
<dbReference type="KEGG" id="xla:734812"/>
<dbReference type="AGR" id="Xenbase:XB-GENE-5847273"/>
<dbReference type="CTD" id="734812"/>
<dbReference type="Xenbase" id="XB-GENE-5847273">
    <property type="gene designation" value="czib.L"/>
</dbReference>
<dbReference type="OrthoDB" id="10248838at2759"/>
<dbReference type="Proteomes" id="UP000186698">
    <property type="component" value="Chromosome 4L"/>
</dbReference>
<dbReference type="Bgee" id="734812">
    <property type="expression patterns" value="Expressed in egg cell and 19 other cell types or tissues"/>
</dbReference>
<dbReference type="GO" id="GO:0008270">
    <property type="term" value="F:zinc ion binding"/>
    <property type="evidence" value="ECO:0000250"/>
    <property type="project" value="UniProtKB"/>
</dbReference>
<dbReference type="InterPro" id="IPR008584">
    <property type="entry name" value="CXXC_Zn-binding_euk"/>
</dbReference>
<dbReference type="PANTHER" id="PTHR12857">
    <property type="entry name" value="CXXC MOTIF CONTAINING ZINC BINDING PROTEIN"/>
    <property type="match status" value="1"/>
</dbReference>
<dbReference type="PANTHER" id="PTHR12857:SF0">
    <property type="entry name" value="CXXC MOTIF CONTAINING ZINC BINDING PROTEIN"/>
    <property type="match status" value="1"/>
</dbReference>
<dbReference type="Pfam" id="PF05907">
    <property type="entry name" value="CXXC_Zn-b_euk"/>
    <property type="match status" value="1"/>
</dbReference>
<dbReference type="SUPFAM" id="SSF141678">
    <property type="entry name" value="MAL13P1.257-like"/>
    <property type="match status" value="1"/>
</dbReference>
<accession>Q3B8G0</accession>
<gene>
    <name type="primary">czib</name>
</gene>
<name>CZIB_XENLA</name>
<feature type="chain" id="PRO_0000264154" description="CXXC motif containing zinc binding protein">
    <location>
        <begin position="1"/>
        <end position="160"/>
    </location>
</feature>
<feature type="binding site" evidence="1">
    <location>
        <position position="33"/>
    </location>
    <ligand>
        <name>Zn(2+)</name>
        <dbReference type="ChEBI" id="CHEBI:29105"/>
    </ligand>
</feature>
<feature type="binding site" evidence="1">
    <location>
        <position position="36"/>
    </location>
    <ligand>
        <name>Zn(2+)</name>
        <dbReference type="ChEBI" id="CHEBI:29105"/>
    </ligand>
</feature>
<feature type="binding site" evidence="1">
    <location>
        <position position="67"/>
    </location>
    <ligand>
        <name>Zn(2+)</name>
        <dbReference type="ChEBI" id="CHEBI:29105"/>
    </ligand>
</feature>
<feature type="binding site" evidence="1">
    <location>
        <position position="70"/>
    </location>
    <ligand>
        <name>Zn(2+)</name>
        <dbReference type="ChEBI" id="CHEBI:29105"/>
    </ligand>
</feature>
<reference key="1">
    <citation type="submission" date="2005-10" db="EMBL/GenBank/DDBJ databases">
        <authorList>
            <consortium name="NIH - Xenopus Gene Collection (XGC) project"/>
        </authorList>
    </citation>
    <scope>NUCLEOTIDE SEQUENCE [LARGE SCALE MRNA]</scope>
    <source>
        <tissue>Testis</tissue>
    </source>
</reference>
<evidence type="ECO:0000250" key="1">
    <source>
        <dbReference type="UniProtKB" id="Q9NWV4"/>
    </source>
</evidence>
<evidence type="ECO:0000305" key="2"/>
<protein>
    <recommendedName>
        <fullName evidence="2">CXXC motif containing zinc binding protein</fullName>
    </recommendedName>
    <alternativeName>
        <fullName>UPF0587 protein C1orf123 homolog</fullName>
    </alternativeName>
</protein>
<organism>
    <name type="scientific">Xenopus laevis</name>
    <name type="common">African clawed frog</name>
    <dbReference type="NCBI Taxonomy" id="8355"/>
    <lineage>
        <taxon>Eukaryota</taxon>
        <taxon>Metazoa</taxon>
        <taxon>Chordata</taxon>
        <taxon>Craniata</taxon>
        <taxon>Vertebrata</taxon>
        <taxon>Euteleostomi</taxon>
        <taxon>Amphibia</taxon>
        <taxon>Batrachia</taxon>
        <taxon>Anura</taxon>
        <taxon>Pipoidea</taxon>
        <taxon>Pipidae</taxon>
        <taxon>Xenopodinae</taxon>
        <taxon>Xenopus</taxon>
        <taxon>Xenopus</taxon>
    </lineage>
</organism>
<proteinExistence type="evidence at transcript level"/>
<keyword id="KW-0479">Metal-binding</keyword>
<keyword id="KW-1185">Reference proteome</keyword>
<keyword id="KW-0862">Zinc</keyword>